<comment type="catalytic activity">
    <reaction evidence="1">
        <text>5-amino-1-(5-phospho-D-ribosyl)imidazole-4-carboxylate + L-aspartate + ATP = (2S)-2-[5-amino-1-(5-phospho-beta-D-ribosyl)imidazole-4-carboxamido]succinate + ADP + phosphate + 2 H(+)</text>
        <dbReference type="Rhea" id="RHEA:22628"/>
        <dbReference type="ChEBI" id="CHEBI:15378"/>
        <dbReference type="ChEBI" id="CHEBI:29991"/>
        <dbReference type="ChEBI" id="CHEBI:30616"/>
        <dbReference type="ChEBI" id="CHEBI:43474"/>
        <dbReference type="ChEBI" id="CHEBI:58443"/>
        <dbReference type="ChEBI" id="CHEBI:77657"/>
        <dbReference type="ChEBI" id="CHEBI:456216"/>
        <dbReference type="EC" id="6.3.2.6"/>
    </reaction>
</comment>
<comment type="pathway">
    <text evidence="1">Purine metabolism; IMP biosynthesis via de novo pathway; 5-amino-1-(5-phospho-D-ribosyl)imidazole-4-carboxamide from 5-amino-1-(5-phospho-D-ribosyl)imidazole-4-carboxylate: step 1/2.</text>
</comment>
<comment type="similarity">
    <text evidence="1">Belongs to the SAICAR synthetase family.</text>
</comment>
<gene>
    <name evidence="1" type="primary">purC</name>
    <name type="ordered locus">STER_0049</name>
</gene>
<reference key="1">
    <citation type="journal article" date="2006" name="Proc. Natl. Acad. Sci. U.S.A.">
        <title>Comparative genomics of the lactic acid bacteria.</title>
        <authorList>
            <person name="Makarova K.S."/>
            <person name="Slesarev A."/>
            <person name="Wolf Y.I."/>
            <person name="Sorokin A."/>
            <person name="Mirkin B."/>
            <person name="Koonin E.V."/>
            <person name="Pavlov A."/>
            <person name="Pavlova N."/>
            <person name="Karamychev V."/>
            <person name="Polouchine N."/>
            <person name="Shakhova V."/>
            <person name="Grigoriev I."/>
            <person name="Lou Y."/>
            <person name="Rohksar D."/>
            <person name="Lucas S."/>
            <person name="Huang K."/>
            <person name="Goodstein D.M."/>
            <person name="Hawkins T."/>
            <person name="Plengvidhya V."/>
            <person name="Welker D."/>
            <person name="Hughes J."/>
            <person name="Goh Y."/>
            <person name="Benson A."/>
            <person name="Baldwin K."/>
            <person name="Lee J.-H."/>
            <person name="Diaz-Muniz I."/>
            <person name="Dosti B."/>
            <person name="Smeianov V."/>
            <person name="Wechter W."/>
            <person name="Barabote R."/>
            <person name="Lorca G."/>
            <person name="Altermann E."/>
            <person name="Barrangou R."/>
            <person name="Ganesan B."/>
            <person name="Xie Y."/>
            <person name="Rawsthorne H."/>
            <person name="Tamir D."/>
            <person name="Parker C."/>
            <person name="Breidt F."/>
            <person name="Broadbent J.R."/>
            <person name="Hutkins R."/>
            <person name="O'Sullivan D."/>
            <person name="Steele J."/>
            <person name="Unlu G."/>
            <person name="Saier M.H. Jr."/>
            <person name="Klaenhammer T."/>
            <person name="Richardson P."/>
            <person name="Kozyavkin S."/>
            <person name="Weimer B.C."/>
            <person name="Mills D.A."/>
        </authorList>
    </citation>
    <scope>NUCLEOTIDE SEQUENCE [LARGE SCALE GENOMIC DNA]</scope>
    <source>
        <strain>ATCC BAA-491 / LMD-9</strain>
    </source>
</reference>
<organism>
    <name type="scientific">Streptococcus thermophilus (strain ATCC BAA-491 / LMD-9)</name>
    <dbReference type="NCBI Taxonomy" id="322159"/>
    <lineage>
        <taxon>Bacteria</taxon>
        <taxon>Bacillati</taxon>
        <taxon>Bacillota</taxon>
        <taxon>Bacilli</taxon>
        <taxon>Lactobacillales</taxon>
        <taxon>Streptococcaceae</taxon>
        <taxon>Streptococcus</taxon>
    </lineage>
</organism>
<dbReference type="EC" id="6.3.2.6" evidence="1"/>
<dbReference type="EMBL" id="CP000419">
    <property type="protein sequence ID" value="ABJ65421.1"/>
    <property type="molecule type" value="Genomic_DNA"/>
</dbReference>
<dbReference type="RefSeq" id="WP_011680589.1">
    <property type="nucleotide sequence ID" value="NC_008532.1"/>
</dbReference>
<dbReference type="SMR" id="Q03N01"/>
<dbReference type="KEGG" id="ste:STER_0049"/>
<dbReference type="HOGENOM" id="CLU_061495_2_0_9"/>
<dbReference type="UniPathway" id="UPA00074">
    <property type="reaction ID" value="UER00131"/>
</dbReference>
<dbReference type="GO" id="GO:0005524">
    <property type="term" value="F:ATP binding"/>
    <property type="evidence" value="ECO:0007669"/>
    <property type="project" value="UniProtKB-KW"/>
</dbReference>
<dbReference type="GO" id="GO:0004639">
    <property type="term" value="F:phosphoribosylaminoimidazolesuccinocarboxamide synthase activity"/>
    <property type="evidence" value="ECO:0007669"/>
    <property type="project" value="UniProtKB-UniRule"/>
</dbReference>
<dbReference type="GO" id="GO:0006189">
    <property type="term" value="P:'de novo' IMP biosynthetic process"/>
    <property type="evidence" value="ECO:0007669"/>
    <property type="project" value="UniProtKB-UniRule"/>
</dbReference>
<dbReference type="GO" id="GO:0009236">
    <property type="term" value="P:cobalamin biosynthetic process"/>
    <property type="evidence" value="ECO:0007669"/>
    <property type="project" value="InterPro"/>
</dbReference>
<dbReference type="CDD" id="cd01415">
    <property type="entry name" value="SAICAR_synt_PurC"/>
    <property type="match status" value="1"/>
</dbReference>
<dbReference type="FunFam" id="3.30.200.20:FF:000189">
    <property type="entry name" value="Phosphoribosylaminoimidazole-succinocarboxamide synthase"/>
    <property type="match status" value="1"/>
</dbReference>
<dbReference type="FunFam" id="3.30.470.20:FF:000006">
    <property type="entry name" value="Phosphoribosylaminoimidazole-succinocarboxamide synthase"/>
    <property type="match status" value="1"/>
</dbReference>
<dbReference type="Gene3D" id="3.30.470.20">
    <property type="entry name" value="ATP-grasp fold, B domain"/>
    <property type="match status" value="1"/>
</dbReference>
<dbReference type="Gene3D" id="3.30.200.20">
    <property type="entry name" value="Phosphorylase Kinase, domain 1"/>
    <property type="match status" value="1"/>
</dbReference>
<dbReference type="HAMAP" id="MF_00137">
    <property type="entry name" value="SAICAR_synth"/>
    <property type="match status" value="1"/>
</dbReference>
<dbReference type="InterPro" id="IPR028923">
    <property type="entry name" value="SAICAR_synt/ADE2_N"/>
</dbReference>
<dbReference type="InterPro" id="IPR033934">
    <property type="entry name" value="SAICAR_synt_PurC"/>
</dbReference>
<dbReference type="InterPro" id="IPR001636">
    <property type="entry name" value="SAICAR_synth"/>
</dbReference>
<dbReference type="InterPro" id="IPR050089">
    <property type="entry name" value="SAICAR_synthetase"/>
</dbReference>
<dbReference type="InterPro" id="IPR018236">
    <property type="entry name" value="SAICAR_synthetase_CS"/>
</dbReference>
<dbReference type="NCBIfam" id="TIGR00081">
    <property type="entry name" value="purC"/>
    <property type="match status" value="1"/>
</dbReference>
<dbReference type="PANTHER" id="PTHR43599">
    <property type="entry name" value="MULTIFUNCTIONAL PROTEIN ADE2"/>
    <property type="match status" value="1"/>
</dbReference>
<dbReference type="PANTHER" id="PTHR43599:SF3">
    <property type="entry name" value="SI:DKEY-6E2.2"/>
    <property type="match status" value="1"/>
</dbReference>
<dbReference type="Pfam" id="PF01259">
    <property type="entry name" value="SAICAR_synt"/>
    <property type="match status" value="1"/>
</dbReference>
<dbReference type="SUPFAM" id="SSF56104">
    <property type="entry name" value="SAICAR synthase-like"/>
    <property type="match status" value="1"/>
</dbReference>
<dbReference type="PROSITE" id="PS01057">
    <property type="entry name" value="SAICAR_SYNTHETASE_1"/>
    <property type="match status" value="1"/>
</dbReference>
<dbReference type="PROSITE" id="PS01058">
    <property type="entry name" value="SAICAR_SYNTHETASE_2"/>
    <property type="match status" value="1"/>
</dbReference>
<sequence>MSNQLIYTGKAKDIYSTEDENVIKSVYKDQATMLNGARKETIKGKGVLNNQISSLIFEKLNASGVATHFIERISDTEQLNKKVTIIPLEVVLRNVTAGSFSKRFGVEEGLDLKTPIVEFYYKNDDLDDPFINDEHVKFLNIANDEQIAYIKDETRRINELLKDWFEQIGLRLIDFKLEFGFDKDGKIILADEFSPDNCRLWDAEGHHMDKDVFRRDLGSLTDVYEVVLEKLQGLK</sequence>
<protein>
    <recommendedName>
        <fullName evidence="1">Phosphoribosylaminoimidazole-succinocarboxamide synthase</fullName>
        <ecNumber evidence="1">6.3.2.6</ecNumber>
    </recommendedName>
    <alternativeName>
        <fullName evidence="1">SAICAR synthetase</fullName>
    </alternativeName>
</protein>
<evidence type="ECO:0000255" key="1">
    <source>
        <dbReference type="HAMAP-Rule" id="MF_00137"/>
    </source>
</evidence>
<proteinExistence type="inferred from homology"/>
<keyword id="KW-0067">ATP-binding</keyword>
<keyword id="KW-0436">Ligase</keyword>
<keyword id="KW-0547">Nucleotide-binding</keyword>
<keyword id="KW-0658">Purine biosynthesis</keyword>
<feature type="chain" id="PRO_1000018797" description="Phosphoribosylaminoimidazole-succinocarboxamide synthase">
    <location>
        <begin position="1"/>
        <end position="235"/>
    </location>
</feature>
<name>PUR7_STRTD</name>
<accession>Q03N01</accession>